<proteinExistence type="inferred from homology"/>
<keyword id="KW-0963">Cytoplasm</keyword>
<keyword id="KW-0378">Hydrolase</keyword>
<keyword id="KW-0540">Nuclease</keyword>
<keyword id="KW-0690">Ribosome biogenesis</keyword>
<name>YQGF_RICRS</name>
<evidence type="ECO:0000255" key="1">
    <source>
        <dbReference type="HAMAP-Rule" id="MF_00651"/>
    </source>
</evidence>
<accession>A8GRN5</accession>
<dbReference type="EC" id="3.1.-.-" evidence="1"/>
<dbReference type="EMBL" id="CP000848">
    <property type="protein sequence ID" value="ABV76060.1"/>
    <property type="molecule type" value="Genomic_DNA"/>
</dbReference>
<dbReference type="SMR" id="A8GRN5"/>
<dbReference type="GeneID" id="79937218"/>
<dbReference type="KEGG" id="rri:A1G_02575"/>
<dbReference type="HOGENOM" id="CLU_098240_2_2_5"/>
<dbReference type="Proteomes" id="UP000006832">
    <property type="component" value="Chromosome"/>
</dbReference>
<dbReference type="GO" id="GO:0005829">
    <property type="term" value="C:cytosol"/>
    <property type="evidence" value="ECO:0007669"/>
    <property type="project" value="TreeGrafter"/>
</dbReference>
<dbReference type="GO" id="GO:0004518">
    <property type="term" value="F:nuclease activity"/>
    <property type="evidence" value="ECO:0007669"/>
    <property type="project" value="UniProtKB-KW"/>
</dbReference>
<dbReference type="GO" id="GO:0000967">
    <property type="term" value="P:rRNA 5'-end processing"/>
    <property type="evidence" value="ECO:0007669"/>
    <property type="project" value="UniProtKB-UniRule"/>
</dbReference>
<dbReference type="CDD" id="cd16964">
    <property type="entry name" value="YqgF"/>
    <property type="match status" value="1"/>
</dbReference>
<dbReference type="Gene3D" id="3.30.420.140">
    <property type="entry name" value="YqgF/RNase H-like domain"/>
    <property type="match status" value="1"/>
</dbReference>
<dbReference type="HAMAP" id="MF_00651">
    <property type="entry name" value="Nuclease_YqgF"/>
    <property type="match status" value="1"/>
</dbReference>
<dbReference type="InterPro" id="IPR012337">
    <property type="entry name" value="RNaseH-like_sf"/>
</dbReference>
<dbReference type="InterPro" id="IPR005227">
    <property type="entry name" value="YqgF"/>
</dbReference>
<dbReference type="InterPro" id="IPR006641">
    <property type="entry name" value="YqgF/RNaseH-like_dom"/>
</dbReference>
<dbReference type="InterPro" id="IPR037027">
    <property type="entry name" value="YqgF/RNaseH-like_dom_sf"/>
</dbReference>
<dbReference type="NCBIfam" id="TIGR00250">
    <property type="entry name" value="RNAse_H_YqgF"/>
    <property type="match status" value="1"/>
</dbReference>
<dbReference type="PANTHER" id="PTHR33317">
    <property type="entry name" value="POLYNUCLEOTIDYL TRANSFERASE, RIBONUCLEASE H-LIKE SUPERFAMILY PROTEIN"/>
    <property type="match status" value="1"/>
</dbReference>
<dbReference type="PANTHER" id="PTHR33317:SF4">
    <property type="entry name" value="POLYNUCLEOTIDYL TRANSFERASE, RIBONUCLEASE H-LIKE SUPERFAMILY PROTEIN"/>
    <property type="match status" value="1"/>
</dbReference>
<dbReference type="Pfam" id="PF03652">
    <property type="entry name" value="RuvX"/>
    <property type="match status" value="1"/>
</dbReference>
<dbReference type="SMART" id="SM00732">
    <property type="entry name" value="YqgFc"/>
    <property type="match status" value="1"/>
</dbReference>
<dbReference type="SUPFAM" id="SSF53098">
    <property type="entry name" value="Ribonuclease H-like"/>
    <property type="match status" value="1"/>
</dbReference>
<organism>
    <name type="scientific">Rickettsia rickettsii (strain Sheila Smith)</name>
    <dbReference type="NCBI Taxonomy" id="392021"/>
    <lineage>
        <taxon>Bacteria</taxon>
        <taxon>Pseudomonadati</taxon>
        <taxon>Pseudomonadota</taxon>
        <taxon>Alphaproteobacteria</taxon>
        <taxon>Rickettsiales</taxon>
        <taxon>Rickettsiaceae</taxon>
        <taxon>Rickettsieae</taxon>
        <taxon>Rickettsia</taxon>
        <taxon>spotted fever group</taxon>
    </lineage>
</organism>
<feature type="chain" id="PRO_1000061564" description="Putative pre-16S rRNA nuclease">
    <location>
        <begin position="1"/>
        <end position="154"/>
    </location>
</feature>
<gene>
    <name type="ordered locus">A1G_02575</name>
</gene>
<protein>
    <recommendedName>
        <fullName evidence="1">Putative pre-16S rRNA nuclease</fullName>
        <ecNumber evidence="1">3.1.-.-</ecNumber>
    </recommendedName>
</protein>
<reference key="1">
    <citation type="submission" date="2007-09" db="EMBL/GenBank/DDBJ databases">
        <title>Complete genome sequence of Rickettsia rickettsii.</title>
        <authorList>
            <person name="Madan A."/>
            <person name="Fahey J."/>
            <person name="Helton E."/>
            <person name="Ketteman M."/>
            <person name="Madan A."/>
            <person name="Rodrigues S."/>
            <person name="Sanchez A."/>
            <person name="Dasch G."/>
            <person name="Eremeeva M."/>
        </authorList>
    </citation>
    <scope>NUCLEOTIDE SEQUENCE [LARGE SCALE GENOMIC DNA]</scope>
    <source>
        <strain>Sheila Smith</strain>
    </source>
</reference>
<comment type="function">
    <text evidence="1">Could be a nuclease involved in processing of the 5'-end of pre-16S rRNA.</text>
</comment>
<comment type="subcellular location">
    <subcellularLocation>
        <location evidence="1">Cytoplasm</location>
    </subcellularLocation>
</comment>
<comment type="similarity">
    <text evidence="1">Belongs to the YqgF nuclease family.</text>
</comment>
<sequence length="154" mass="17059">MIIKNLQEFYRLLIPNAPLIAIDYGSKKLGIALSNQELSIAMPLNTITEINTKIVITVLLNIIEKYKVCGVIIGLPIDMSGAVTEQTNIVMKFAEELAKSINLPIYLQDERLTTKAANNLLKSFGVKRKDRNNNDDAVAASMILETVLDSIKNI</sequence>